<comment type="function">
    <text evidence="1 2">Structural component of specialized membrane microdomains known as tetraspanin-enriched microdomains (TERMs), which act as platforms for receptor clustering and signaling. Essential for trafficking and compartmentalization of CD19 receptor on the surface of activated B cells. Upon initial encounter with microbial pathogens, enables the assembly of CD19-CR2/CD21 and B cell receptor (BCR) complexes at signaling TERMs, lowering the threshold dose of antigen required to trigger B cell clonal expansion and antibody production. In T cells, facilitates the localization of CD247/CD3 zeta at antigen-induced synapses with B cells, providing for costimulation and polarization toward T helper type 2 phenotype. Present in MHC class II compartments, may also play a role in antigen presentation (By similarity). Can act both as positive and negative regulator of homotypic or heterotypic cell-cell fusion processes. Positively regulates sperm-egg fusion and may be involved in acrosome reaction. In myoblasts, associates with CD9 and PTGFRN and inhibits myotube fusion during muscle regeneration (By similarity). In macrophages, associates with CD9 and beta-1 and beta-2 integrins, and prevents macrophage fusion into multinucleated giant cells specialized in ingesting complement-opsonized large particles (By similarity). Also prevents the fusion of mononuclear cell progenitors into osteoclasts in charge of bone resorption (By similarity). May regulate the compartmentalization of enzymatic activities. In T cells, defines the subcellular localization of dNTPase SAMHD1 and permits its degradation by the proteasome, thereby controlling intracellular dNTP levels (By similarity). Also involved in cell adhesion and motility. Positively regulates integrin-mediated adhesion of macrophages, particularly relevant for the inflammatory response in the lung (By similarity).</text>
</comment>
<comment type="subunit">
    <text evidence="1 2">Homodimer. Part of a complex composed of CD19, CR2/CD21, CD81 and IFITM1/CD225 in the membrane of mature B cells. Interacts (via the second extracellular domain) with CD19; this interaction is initiated early during biosynthesis in the ER and enables trafficking of only properly folded CD19. Part of a complex that includes MHC class II/HLA-DR molecules and IFITM1. Interacts with IFITM1 (By similarity). Interacts with IFITM2 and IFITM3 (By similarity). Part of integrin-tetraspanin complex composed of CD9, CD81, beta-1 and beta-2 integrins in the membrane of monocyte/macrophages. Interacts (via the second extracellular domain) with integrin ITGAV:ITGB3. Interacts with CD247/CD3 zeta, ICAM1 and CD9 at the immune synapse on T cell membrane (By similarity). Part of a GPCR-tetraspanin complex consisting at least of ADGRG1, CD81, possibly CD9, and GNA11 in which CD81 enhances the association of ADGRG1 with GNA11. Part of a complex composed of CD9, CD81, PTGFRN and IGSF8 (By similarity). Interacts directly with IGSF8. Interacts with CD53 and SCIMP. Interacts with SAMHD1 (via its C-terminus) (By similarity). Interacts with glypican GPC3 and with the transcriptional repressor HHEX; binding to GPC3 decreases the availability of free CD81 for binding to HHEX, resulting in nuclear translocation of HHEX and transcriptional repression (By similarity). Interacts with CLDN1. Interacts with CLDN6 and CLDN9 (By similarity).</text>
</comment>
<comment type="subcellular location">
    <subcellularLocation>
        <location evidence="1">Cell membrane</location>
        <topology evidence="3">Multi-pass membrane protein</topology>
    </subcellularLocation>
    <subcellularLocation>
        <location evidence="2">Basolateral cell membrane</location>
        <topology evidence="3">Multi-pass membrane protein</topology>
    </subcellularLocation>
    <text evidence="2">Associates with CLDN1 and the CLDN1-CD81 complex localizes to the basolateral cell membrane.</text>
</comment>
<comment type="domain">
    <text evidence="2">Binds cholesterol in a cavity lined by the transmembrane spans.</text>
</comment>
<comment type="PTM">
    <text evidence="4">Not glycosylated.</text>
</comment>
<comment type="PTM">
    <text evidence="2">Likely constitutively palmitoylated at low levels. Protein palmitoylation is up-regulated upon coligation of BCR and CD9-C2R-CD81 complexes in lipid rafts.</text>
</comment>
<comment type="similarity">
    <text evidence="4">Belongs to the tetraspanin (TM4SF) family.</text>
</comment>
<name>CD81_BOVIN</name>
<evidence type="ECO:0000250" key="1">
    <source>
        <dbReference type="UniProtKB" id="P35762"/>
    </source>
</evidence>
<evidence type="ECO:0000250" key="2">
    <source>
        <dbReference type="UniProtKB" id="P60033"/>
    </source>
</evidence>
<evidence type="ECO:0000255" key="3"/>
<evidence type="ECO:0000305" key="4"/>
<accession>Q3ZCD0</accession>
<protein>
    <recommendedName>
        <fullName>CD81 antigen</fullName>
    </recommendedName>
    <cdAntigenName>CD81</cdAntigenName>
</protein>
<reference key="1">
    <citation type="submission" date="2005-08" db="EMBL/GenBank/DDBJ databases">
        <authorList>
            <consortium name="NIH - Mammalian Gene Collection (MGC) project"/>
        </authorList>
    </citation>
    <scope>NUCLEOTIDE SEQUENCE [LARGE SCALE MRNA]</scope>
    <source>
        <strain>Crossbred X Angus</strain>
        <tissue>Ileum</tissue>
    </source>
</reference>
<organism>
    <name type="scientific">Bos taurus</name>
    <name type="common">Bovine</name>
    <dbReference type="NCBI Taxonomy" id="9913"/>
    <lineage>
        <taxon>Eukaryota</taxon>
        <taxon>Metazoa</taxon>
        <taxon>Chordata</taxon>
        <taxon>Craniata</taxon>
        <taxon>Vertebrata</taxon>
        <taxon>Euteleostomi</taxon>
        <taxon>Mammalia</taxon>
        <taxon>Eutheria</taxon>
        <taxon>Laurasiatheria</taxon>
        <taxon>Artiodactyla</taxon>
        <taxon>Ruminantia</taxon>
        <taxon>Pecora</taxon>
        <taxon>Bovidae</taxon>
        <taxon>Bovinae</taxon>
        <taxon>Bos</taxon>
    </lineage>
</organism>
<gene>
    <name type="primary">CD81</name>
</gene>
<sequence length="236" mass="25854">MGVEGCTKCIKYLLFVFNFVFWLAGGVILGVALWLRHDPQTTNLLYLELGDRPAPNTFYVGIYILIAVGAVMMFVGFLGCYGAIQESQCLLGTFFTCLVILFACEVAAGIWGFVNKDQIAKDVKQFYDQALQQAIVDDDANNAKAVVKTFHETLNCCGSNTLMTLTTSVLKNSLCPSSGNVITNLFKEDCHGKIDELFSGKLYLIGIAAIVVAVIMIFEMILSMVLCCGIRNSSVY</sequence>
<feature type="chain" id="PRO_0000284960" description="CD81 antigen">
    <location>
        <begin position="1"/>
        <end position="236"/>
    </location>
</feature>
<feature type="topological domain" description="Cytoplasmic" evidence="4">
    <location>
        <begin position="1"/>
        <end position="12"/>
    </location>
</feature>
<feature type="transmembrane region" description="Helical" evidence="2">
    <location>
        <begin position="13"/>
        <end position="33"/>
    </location>
</feature>
<feature type="topological domain" description="Extracellular" evidence="4">
    <location>
        <begin position="34"/>
        <end position="63"/>
    </location>
</feature>
<feature type="transmembrane region" description="Helical" evidence="2">
    <location>
        <begin position="64"/>
        <end position="84"/>
    </location>
</feature>
<feature type="topological domain" description="Cytoplasmic" evidence="4">
    <location>
        <begin position="85"/>
        <end position="89"/>
    </location>
</feature>
<feature type="transmembrane region" description="Helical" evidence="2">
    <location>
        <begin position="90"/>
        <end position="112"/>
    </location>
</feature>
<feature type="topological domain" description="Extracellular" evidence="4">
    <location>
        <begin position="113"/>
        <end position="201"/>
    </location>
</feature>
<feature type="transmembrane region" description="Helical" evidence="2">
    <location>
        <begin position="202"/>
        <end position="224"/>
    </location>
</feature>
<feature type="topological domain" description="Cytoplasmic" evidence="4">
    <location>
        <begin position="225"/>
        <end position="236"/>
    </location>
</feature>
<feature type="binding site" evidence="2">
    <location>
        <position position="219"/>
    </location>
    <ligand>
        <name>cholesterol</name>
        <dbReference type="ChEBI" id="CHEBI:16113"/>
    </ligand>
</feature>
<feature type="site" description="Important for interaction with integrin" evidence="2">
    <location>
        <position position="116"/>
    </location>
</feature>
<feature type="site" description="Important for interaction with integrin" evidence="2">
    <location>
        <position position="144"/>
    </location>
</feature>
<feature type="site" description="Important for interaction with integrin" evidence="2">
    <location>
        <position position="148"/>
    </location>
</feature>
<feature type="disulfide bond" evidence="2">
    <location>
        <begin position="156"/>
        <end position="190"/>
    </location>
</feature>
<feature type="disulfide bond" evidence="2">
    <location>
        <begin position="157"/>
        <end position="175"/>
    </location>
</feature>
<keyword id="KW-1064">Adaptive immunity</keyword>
<keyword id="KW-1003">Cell membrane</keyword>
<keyword id="KW-1015">Disulfide bond</keyword>
<keyword id="KW-0391">Immunity</keyword>
<keyword id="KW-0446">Lipid-binding</keyword>
<keyword id="KW-0472">Membrane</keyword>
<keyword id="KW-1185">Reference proteome</keyword>
<keyword id="KW-0812">Transmembrane</keyword>
<keyword id="KW-1133">Transmembrane helix</keyword>
<dbReference type="EMBL" id="BC102513">
    <property type="protein sequence ID" value="AAI02514.1"/>
    <property type="molecule type" value="mRNA"/>
</dbReference>
<dbReference type="RefSeq" id="NP_001030271.1">
    <property type="nucleotide sequence ID" value="NM_001035099.1"/>
</dbReference>
<dbReference type="SMR" id="Q3ZCD0"/>
<dbReference type="FunCoup" id="Q3ZCD0">
    <property type="interactions" value="521"/>
</dbReference>
<dbReference type="STRING" id="9913.ENSBTAP00000054606"/>
<dbReference type="SwissPalm" id="Q3ZCD0"/>
<dbReference type="PaxDb" id="9913-ENSBTAP00000054606"/>
<dbReference type="PeptideAtlas" id="Q3ZCD0"/>
<dbReference type="GeneID" id="511435"/>
<dbReference type="KEGG" id="bta:511435"/>
<dbReference type="CTD" id="975"/>
<dbReference type="VEuPathDB" id="HostDB:ENSBTAG00000047495"/>
<dbReference type="eggNOG" id="KOG3882">
    <property type="taxonomic scope" value="Eukaryota"/>
</dbReference>
<dbReference type="HOGENOM" id="CLU_055524_10_0_1"/>
<dbReference type="InParanoid" id="Q3ZCD0"/>
<dbReference type="OMA" id="HETLSCC"/>
<dbReference type="OrthoDB" id="5870230at2759"/>
<dbReference type="Reactome" id="R-BTA-198933">
    <property type="pathway name" value="Immunoregulatory interactions between a Lymphoid and a non-Lymphoid cell"/>
</dbReference>
<dbReference type="Reactome" id="R-BTA-977606">
    <property type="pathway name" value="Regulation of Complement cascade"/>
</dbReference>
<dbReference type="Proteomes" id="UP000009136">
    <property type="component" value="Chromosome 29"/>
</dbReference>
<dbReference type="Bgee" id="ENSBTAG00000047495">
    <property type="expression patterns" value="Expressed in vas deferens and 104 other cell types or tissues"/>
</dbReference>
<dbReference type="GO" id="GO:0016323">
    <property type="term" value="C:basolateral plasma membrane"/>
    <property type="evidence" value="ECO:0007669"/>
    <property type="project" value="UniProtKB-SubCell"/>
</dbReference>
<dbReference type="GO" id="GO:0001772">
    <property type="term" value="C:immunological synapse"/>
    <property type="evidence" value="ECO:0000250"/>
    <property type="project" value="UniProtKB"/>
</dbReference>
<dbReference type="GO" id="GO:0016020">
    <property type="term" value="C:membrane"/>
    <property type="evidence" value="ECO:0000250"/>
    <property type="project" value="UniProtKB"/>
</dbReference>
<dbReference type="GO" id="GO:0005886">
    <property type="term" value="C:plasma membrane"/>
    <property type="evidence" value="ECO:0000250"/>
    <property type="project" value="UniProtKB"/>
</dbReference>
<dbReference type="GO" id="GO:0097197">
    <property type="term" value="C:tetraspanin-enriched microdomain"/>
    <property type="evidence" value="ECO:0000250"/>
    <property type="project" value="UniProtKB"/>
</dbReference>
<dbReference type="GO" id="GO:0015485">
    <property type="term" value="F:cholesterol binding"/>
    <property type="evidence" value="ECO:0000250"/>
    <property type="project" value="UniProtKB"/>
</dbReference>
<dbReference type="GO" id="GO:0005178">
    <property type="term" value="F:integrin binding"/>
    <property type="evidence" value="ECO:0000250"/>
    <property type="project" value="UniProtKB"/>
</dbReference>
<dbReference type="GO" id="GO:0035783">
    <property type="term" value="P:CD4-positive, alpha-beta T cell costimulation"/>
    <property type="evidence" value="ECO:0000250"/>
    <property type="project" value="UniProtKB"/>
</dbReference>
<dbReference type="GO" id="GO:0071404">
    <property type="term" value="P:cellular response to low-density lipoprotein particle stimulus"/>
    <property type="evidence" value="ECO:0000250"/>
    <property type="project" value="UniProtKB"/>
</dbReference>
<dbReference type="GO" id="GO:0002455">
    <property type="term" value="P:humoral immune response mediated by circulating immunoglobulin"/>
    <property type="evidence" value="ECO:0000250"/>
    <property type="project" value="UniProtKB"/>
</dbReference>
<dbReference type="GO" id="GO:0001771">
    <property type="term" value="P:immunological synapse formation"/>
    <property type="evidence" value="ECO:0000250"/>
    <property type="project" value="UniProtKB"/>
</dbReference>
<dbReference type="GO" id="GO:0034238">
    <property type="term" value="P:macrophage fusion"/>
    <property type="evidence" value="ECO:0000250"/>
    <property type="project" value="UniProtKB"/>
</dbReference>
<dbReference type="GO" id="GO:0014905">
    <property type="term" value="P:myoblast fusion involved in skeletal muscle regeneration"/>
    <property type="evidence" value="ECO:0000250"/>
    <property type="project" value="UniProtKB"/>
</dbReference>
<dbReference type="GO" id="GO:0072675">
    <property type="term" value="P:osteoclast fusion"/>
    <property type="evidence" value="ECO:0000250"/>
    <property type="project" value="UniProtKB"/>
</dbReference>
<dbReference type="GO" id="GO:0050871">
    <property type="term" value="P:positive regulation of B cell activation"/>
    <property type="evidence" value="ECO:0000250"/>
    <property type="project" value="UniProtKB"/>
</dbReference>
<dbReference type="GO" id="GO:0050861">
    <property type="term" value="P:positive regulation of B cell receptor signaling pathway"/>
    <property type="evidence" value="ECO:0000250"/>
    <property type="project" value="UniProtKB"/>
</dbReference>
<dbReference type="GO" id="GO:2000563">
    <property type="term" value="P:positive regulation of CD4-positive, alpha-beta T cell proliferation"/>
    <property type="evidence" value="ECO:0000250"/>
    <property type="project" value="UniProtKB"/>
</dbReference>
<dbReference type="GO" id="GO:0002863">
    <property type="term" value="P:positive regulation of inflammatory response to antigenic stimulus"/>
    <property type="evidence" value="ECO:0000250"/>
    <property type="project" value="UniProtKB"/>
</dbReference>
<dbReference type="GO" id="GO:0070863">
    <property type="term" value="P:positive regulation of protein exit from endoplasmic reticulum"/>
    <property type="evidence" value="ECO:0000250"/>
    <property type="project" value="UniProtKB"/>
</dbReference>
<dbReference type="GO" id="GO:1903911">
    <property type="term" value="P:positive regulation of receptor clustering"/>
    <property type="evidence" value="ECO:0000250"/>
    <property type="project" value="UniProtKB"/>
</dbReference>
<dbReference type="GO" id="GO:2001190">
    <property type="term" value="P:positive regulation of T cell activation via T cell receptor contact with antigen bound to MHC molecule on antigen presenting cell"/>
    <property type="evidence" value="ECO:0000250"/>
    <property type="project" value="UniProtKB"/>
</dbReference>
<dbReference type="GO" id="GO:0050862">
    <property type="term" value="P:positive regulation of T cell receptor signaling pathway"/>
    <property type="evidence" value="ECO:0000250"/>
    <property type="project" value="UniProtKB"/>
</dbReference>
<dbReference type="GO" id="GO:2000553">
    <property type="term" value="P:positive regulation of T-helper 2 cell cytokine production"/>
    <property type="evidence" value="ECO:0000250"/>
    <property type="project" value="UniProtKB"/>
</dbReference>
<dbReference type="GO" id="GO:0072659">
    <property type="term" value="P:protein localization to plasma membrane"/>
    <property type="evidence" value="ECO:0000250"/>
    <property type="project" value="UniProtKB"/>
</dbReference>
<dbReference type="GO" id="GO:0031623">
    <property type="term" value="P:receptor internalization"/>
    <property type="evidence" value="ECO:0000250"/>
    <property type="project" value="UniProtKB"/>
</dbReference>
<dbReference type="GO" id="GO:1905521">
    <property type="term" value="P:regulation of macrophage migration"/>
    <property type="evidence" value="ECO:0000250"/>
    <property type="project" value="UniProtKB"/>
</dbReference>
<dbReference type="CDD" id="cd03151">
    <property type="entry name" value="CD81_like_LEL"/>
    <property type="match status" value="1"/>
</dbReference>
<dbReference type="FunFam" id="1.10.1450.10:FF:000010">
    <property type="entry name" value="Tetraspanin"/>
    <property type="match status" value="1"/>
</dbReference>
<dbReference type="Gene3D" id="1.10.1450.10">
    <property type="entry name" value="Tetraspanin"/>
    <property type="match status" value="1"/>
</dbReference>
<dbReference type="InterPro" id="IPR018499">
    <property type="entry name" value="Tetraspanin/Peripherin"/>
</dbReference>
<dbReference type="InterPro" id="IPR000301">
    <property type="entry name" value="Tetraspanin_animals"/>
</dbReference>
<dbReference type="InterPro" id="IPR018503">
    <property type="entry name" value="Tetraspanin_CS"/>
</dbReference>
<dbReference type="InterPro" id="IPR008952">
    <property type="entry name" value="Tetraspanin_EC2_sf"/>
</dbReference>
<dbReference type="PANTHER" id="PTHR19282:SF214">
    <property type="entry name" value="CD81 ANTIGEN"/>
    <property type="match status" value="1"/>
</dbReference>
<dbReference type="PANTHER" id="PTHR19282">
    <property type="entry name" value="TETRASPANIN"/>
    <property type="match status" value="1"/>
</dbReference>
<dbReference type="Pfam" id="PF00335">
    <property type="entry name" value="Tetraspanin"/>
    <property type="match status" value="1"/>
</dbReference>
<dbReference type="PIRSF" id="PIRSF002419">
    <property type="entry name" value="Tetraspanin"/>
    <property type="match status" value="1"/>
</dbReference>
<dbReference type="PRINTS" id="PR00259">
    <property type="entry name" value="TMFOUR"/>
</dbReference>
<dbReference type="SUPFAM" id="SSF48652">
    <property type="entry name" value="Tetraspanin"/>
    <property type="match status" value="1"/>
</dbReference>
<dbReference type="PROSITE" id="PS00421">
    <property type="entry name" value="TM4_1"/>
    <property type="match status" value="1"/>
</dbReference>
<proteinExistence type="evidence at transcript level"/>